<protein>
    <recommendedName>
        <fullName evidence="2">Small ribosomal subunit protein bS18c</fullName>
    </recommendedName>
    <alternativeName>
        <fullName>30S ribosomal protein S18, chloroplastic</fullName>
    </alternativeName>
</protein>
<accession>P0C476</accession>
<accession>P12152</accession>
<accession>Q6QXZ6</accession>
<accession>Q6QY60</accession>
<gene>
    <name type="primary">rps18</name>
    <name type="ORF">9311086</name>
</gene>
<name>RR18_ORYSI</name>
<comment type="subunit">
    <text>Part of the 30S ribosomal subunit.</text>
</comment>
<comment type="subcellular location">
    <subcellularLocation>
        <location>Plastid</location>
        <location>Chloroplast</location>
    </subcellularLocation>
</comment>
<comment type="similarity">
    <text evidence="2">Belongs to the bacterial ribosomal protein bS18 family.</text>
</comment>
<dbReference type="EMBL" id="AY522329">
    <property type="protein sequence ID" value="AAS46069.1"/>
    <property type="molecule type" value="Genomic_DNA"/>
</dbReference>
<dbReference type="RefSeq" id="YP_009161386.1">
    <property type="nucleotide sequence ID" value="NC_027678.1"/>
</dbReference>
<dbReference type="RefSeq" id="YP_654229.1">
    <property type="nucleotide sequence ID" value="NC_008155.1"/>
</dbReference>
<dbReference type="SMR" id="P0C476"/>
<dbReference type="STRING" id="39946.P0C476"/>
<dbReference type="GeneID" id="4126893"/>
<dbReference type="Proteomes" id="UP000007015">
    <property type="component" value="Chloroplast"/>
</dbReference>
<dbReference type="GO" id="GO:0009507">
    <property type="term" value="C:chloroplast"/>
    <property type="evidence" value="ECO:0007669"/>
    <property type="project" value="UniProtKB-SubCell"/>
</dbReference>
<dbReference type="GO" id="GO:0005763">
    <property type="term" value="C:mitochondrial small ribosomal subunit"/>
    <property type="evidence" value="ECO:0007669"/>
    <property type="project" value="TreeGrafter"/>
</dbReference>
<dbReference type="GO" id="GO:0009536">
    <property type="term" value="C:plastid"/>
    <property type="evidence" value="ECO:0000305"/>
    <property type="project" value="Gramene"/>
</dbReference>
<dbReference type="GO" id="GO:0070181">
    <property type="term" value="F:small ribosomal subunit rRNA binding"/>
    <property type="evidence" value="ECO:0007669"/>
    <property type="project" value="TreeGrafter"/>
</dbReference>
<dbReference type="GO" id="GO:0003735">
    <property type="term" value="F:structural constituent of ribosome"/>
    <property type="evidence" value="ECO:0007669"/>
    <property type="project" value="InterPro"/>
</dbReference>
<dbReference type="GO" id="GO:0006412">
    <property type="term" value="P:translation"/>
    <property type="evidence" value="ECO:0007669"/>
    <property type="project" value="UniProtKB-UniRule"/>
</dbReference>
<dbReference type="FunFam" id="4.10.640.10:FF:000002">
    <property type="entry name" value="30S ribosomal protein S18, chloroplastic"/>
    <property type="match status" value="1"/>
</dbReference>
<dbReference type="Gene3D" id="4.10.640.10">
    <property type="entry name" value="Ribosomal protein S18"/>
    <property type="match status" value="1"/>
</dbReference>
<dbReference type="HAMAP" id="MF_00270">
    <property type="entry name" value="Ribosomal_bS18"/>
    <property type="match status" value="1"/>
</dbReference>
<dbReference type="InterPro" id="IPR001648">
    <property type="entry name" value="Ribosomal_bS18"/>
</dbReference>
<dbReference type="InterPro" id="IPR018275">
    <property type="entry name" value="Ribosomal_bS18_CS"/>
</dbReference>
<dbReference type="InterPro" id="IPR036870">
    <property type="entry name" value="Ribosomal_bS18_sf"/>
</dbReference>
<dbReference type="NCBIfam" id="TIGR00165">
    <property type="entry name" value="S18"/>
    <property type="match status" value="1"/>
</dbReference>
<dbReference type="PANTHER" id="PTHR13479">
    <property type="entry name" value="30S RIBOSOMAL PROTEIN S18"/>
    <property type="match status" value="1"/>
</dbReference>
<dbReference type="PANTHER" id="PTHR13479:SF40">
    <property type="entry name" value="SMALL RIBOSOMAL SUBUNIT PROTEIN BS18M"/>
    <property type="match status" value="1"/>
</dbReference>
<dbReference type="Pfam" id="PF01084">
    <property type="entry name" value="Ribosomal_S18"/>
    <property type="match status" value="1"/>
</dbReference>
<dbReference type="PRINTS" id="PR00974">
    <property type="entry name" value="RIBOSOMALS18"/>
</dbReference>
<dbReference type="SUPFAM" id="SSF46911">
    <property type="entry name" value="Ribosomal protein S18"/>
    <property type="match status" value="1"/>
</dbReference>
<dbReference type="PROSITE" id="PS00057">
    <property type="entry name" value="RIBOSOMAL_S18"/>
    <property type="match status" value="1"/>
</dbReference>
<proteinExistence type="inferred from homology"/>
<geneLocation type="chloroplast"/>
<evidence type="ECO:0000256" key="1">
    <source>
        <dbReference type="SAM" id="MobiDB-lite"/>
    </source>
</evidence>
<evidence type="ECO:0000305" key="2"/>
<sequence>MYTSKQPFHKSKQTFHKSKQTFRKSKQTFRKFKQPFRKPKQPFRRRPRIGPGDRIDYRNMSLINRFISEQGKILSRRINRLTLKQQRLITLAIKQARILSFLPFRNYENEKQFQAQSISIITGPRPRKNRHIPPLTQKFNSNRNLRNSNQTLRNNNRNLSSDC</sequence>
<feature type="chain" id="PRO_0000290075" description="Small ribosomal subunit protein bS18c">
    <location>
        <begin position="1"/>
        <end position="163"/>
    </location>
</feature>
<feature type="repeat">
    <location>
        <begin position="4"/>
        <end position="10"/>
    </location>
</feature>
<feature type="repeat">
    <location>
        <begin position="11"/>
        <end position="17"/>
    </location>
</feature>
<feature type="repeat">
    <location>
        <begin position="18"/>
        <end position="24"/>
    </location>
</feature>
<feature type="repeat">
    <location>
        <begin position="25"/>
        <end position="31"/>
    </location>
</feature>
<feature type="repeat">
    <location>
        <begin position="32"/>
        <end position="38"/>
    </location>
</feature>
<feature type="repeat">
    <location>
        <begin position="39"/>
        <end position="45"/>
    </location>
</feature>
<feature type="region of interest" description="Disordered" evidence="1">
    <location>
        <begin position="1"/>
        <end position="54"/>
    </location>
</feature>
<feature type="region of interest" description="6 X 7 AA tandem repeats">
    <location>
        <begin position="4"/>
        <end position="52"/>
    </location>
</feature>
<feature type="region of interest" description="Disordered" evidence="1">
    <location>
        <begin position="121"/>
        <end position="163"/>
    </location>
</feature>
<feature type="compositionally biased region" description="Basic residues" evidence="1">
    <location>
        <begin position="7"/>
        <end position="48"/>
    </location>
</feature>
<feature type="compositionally biased region" description="Low complexity" evidence="1">
    <location>
        <begin position="140"/>
        <end position="163"/>
    </location>
</feature>
<organism>
    <name type="scientific">Oryza sativa subsp. indica</name>
    <name type="common">Rice</name>
    <dbReference type="NCBI Taxonomy" id="39946"/>
    <lineage>
        <taxon>Eukaryota</taxon>
        <taxon>Viridiplantae</taxon>
        <taxon>Streptophyta</taxon>
        <taxon>Embryophyta</taxon>
        <taxon>Tracheophyta</taxon>
        <taxon>Spermatophyta</taxon>
        <taxon>Magnoliopsida</taxon>
        <taxon>Liliopsida</taxon>
        <taxon>Poales</taxon>
        <taxon>Poaceae</taxon>
        <taxon>BOP clade</taxon>
        <taxon>Oryzoideae</taxon>
        <taxon>Oryzeae</taxon>
        <taxon>Oryzinae</taxon>
        <taxon>Oryza</taxon>
        <taxon>Oryza sativa</taxon>
    </lineage>
</organism>
<keyword id="KW-0150">Chloroplast</keyword>
<keyword id="KW-0934">Plastid</keyword>
<keyword id="KW-1185">Reference proteome</keyword>
<keyword id="KW-0677">Repeat</keyword>
<keyword id="KW-0687">Ribonucleoprotein</keyword>
<keyword id="KW-0689">Ribosomal protein</keyword>
<keyword id="KW-0694">RNA-binding</keyword>
<keyword id="KW-0699">rRNA-binding</keyword>
<reference key="1">
    <citation type="journal article" date="2004" name="Plant Physiol.">
        <title>A comparison of rice chloroplast genomes.</title>
        <authorList>
            <person name="Tang J."/>
            <person name="Xia H."/>
            <person name="Cao M."/>
            <person name="Zhang X."/>
            <person name="Zeng W."/>
            <person name="Hu S."/>
            <person name="Tong W."/>
            <person name="Wang J."/>
            <person name="Wang J."/>
            <person name="Yu J."/>
            <person name="Yang H."/>
            <person name="Zhu L."/>
        </authorList>
    </citation>
    <scope>NUCLEOTIDE SEQUENCE [LARGE SCALE GENOMIC DNA]</scope>
    <source>
        <strain>cv. 93-11</strain>
    </source>
</reference>